<reference key="1">
    <citation type="journal article" date="2002" name="Nature">
        <title>Genome sequence of the plant pathogen Ralstonia solanacearum.</title>
        <authorList>
            <person name="Salanoubat M."/>
            <person name="Genin S."/>
            <person name="Artiguenave F."/>
            <person name="Gouzy J."/>
            <person name="Mangenot S."/>
            <person name="Arlat M."/>
            <person name="Billault A."/>
            <person name="Brottier P."/>
            <person name="Camus J.-C."/>
            <person name="Cattolico L."/>
            <person name="Chandler M."/>
            <person name="Choisne N."/>
            <person name="Claudel-Renard C."/>
            <person name="Cunnac S."/>
            <person name="Demange N."/>
            <person name="Gaspin C."/>
            <person name="Lavie M."/>
            <person name="Moisan A."/>
            <person name="Robert C."/>
            <person name="Saurin W."/>
            <person name="Schiex T."/>
            <person name="Siguier P."/>
            <person name="Thebault P."/>
            <person name="Whalen M."/>
            <person name="Wincker P."/>
            <person name="Levy M."/>
            <person name="Weissenbach J."/>
            <person name="Boucher C.A."/>
        </authorList>
    </citation>
    <scope>NUCLEOTIDE SEQUENCE [LARGE SCALE GENOMIC DNA]</scope>
    <source>
        <strain>ATCC BAA-1114 / GMI1000</strain>
    </source>
</reference>
<name>HEMH_RALN1</name>
<sequence length="371" mass="41411">MPFLPEPLFQHGQPDRTAILLVNLGTPDGTSPREVGRYLRQFLSDPRVVEIPRAAWWFILNVLILPLRSRASAHKYETVWLREANMTGSPLLVYSERQAHALQQLLDAQGHDVVVACAMRYGNPSIPSVMQTLRKQGVERILVLPMYPQYSGTTTATAFDEVFRVMGQMRNQPELRLVKHFHDHPAYINALHQQVGAYWAQHGAPDFARGDKLLLSFHGVPRRTLELGDPYHCACLKTGRLLGEALGLQPGQYLVTFQSRFGRAEWLQPYTAPTLEELGRVGTGRVDVFCPGFPADCLETLEEIAMEGQSTFRVAGGKDFHYIPCLNDSEPWIAGLADIAQAHLQGWPLALPHPHVLEASRTRAQSKGAAA</sequence>
<dbReference type="EC" id="4.98.1.1" evidence="1"/>
<dbReference type="EMBL" id="AL646052">
    <property type="protein sequence ID" value="CAD16350.1"/>
    <property type="molecule type" value="Genomic_DNA"/>
</dbReference>
<dbReference type="RefSeq" id="WP_011002553.1">
    <property type="nucleotide sequence ID" value="NC_003295.1"/>
</dbReference>
<dbReference type="SMR" id="Q8XW32"/>
<dbReference type="STRING" id="267608.RSc2643"/>
<dbReference type="EnsemblBacteria" id="CAD16350">
    <property type="protein sequence ID" value="CAD16350"/>
    <property type="gene ID" value="RSc2643"/>
</dbReference>
<dbReference type="KEGG" id="rso:RSc2643"/>
<dbReference type="eggNOG" id="COG0276">
    <property type="taxonomic scope" value="Bacteria"/>
</dbReference>
<dbReference type="HOGENOM" id="CLU_018884_0_0_4"/>
<dbReference type="UniPathway" id="UPA00252">
    <property type="reaction ID" value="UER00325"/>
</dbReference>
<dbReference type="Proteomes" id="UP000001436">
    <property type="component" value="Chromosome"/>
</dbReference>
<dbReference type="GO" id="GO:0005737">
    <property type="term" value="C:cytoplasm"/>
    <property type="evidence" value="ECO:0007669"/>
    <property type="project" value="UniProtKB-SubCell"/>
</dbReference>
<dbReference type="GO" id="GO:0004325">
    <property type="term" value="F:ferrochelatase activity"/>
    <property type="evidence" value="ECO:0007669"/>
    <property type="project" value="UniProtKB-UniRule"/>
</dbReference>
<dbReference type="GO" id="GO:0046872">
    <property type="term" value="F:metal ion binding"/>
    <property type="evidence" value="ECO:0007669"/>
    <property type="project" value="UniProtKB-KW"/>
</dbReference>
<dbReference type="GO" id="GO:0006783">
    <property type="term" value="P:heme biosynthetic process"/>
    <property type="evidence" value="ECO:0007669"/>
    <property type="project" value="UniProtKB-UniRule"/>
</dbReference>
<dbReference type="CDD" id="cd00419">
    <property type="entry name" value="Ferrochelatase_C"/>
    <property type="match status" value="1"/>
</dbReference>
<dbReference type="CDD" id="cd03411">
    <property type="entry name" value="Ferrochelatase_N"/>
    <property type="match status" value="1"/>
</dbReference>
<dbReference type="FunFam" id="3.40.50.1400:FF:000002">
    <property type="entry name" value="Ferrochelatase"/>
    <property type="match status" value="1"/>
</dbReference>
<dbReference type="Gene3D" id="3.40.50.1400">
    <property type="match status" value="2"/>
</dbReference>
<dbReference type="HAMAP" id="MF_00323">
    <property type="entry name" value="Ferrochelatase"/>
    <property type="match status" value="1"/>
</dbReference>
<dbReference type="InterPro" id="IPR001015">
    <property type="entry name" value="Ferrochelatase"/>
</dbReference>
<dbReference type="InterPro" id="IPR019772">
    <property type="entry name" value="Ferrochelatase_AS"/>
</dbReference>
<dbReference type="InterPro" id="IPR033644">
    <property type="entry name" value="Ferrochelatase_C"/>
</dbReference>
<dbReference type="InterPro" id="IPR033659">
    <property type="entry name" value="Ferrochelatase_N"/>
</dbReference>
<dbReference type="NCBIfam" id="TIGR00109">
    <property type="entry name" value="hemH"/>
    <property type="match status" value="1"/>
</dbReference>
<dbReference type="PANTHER" id="PTHR11108">
    <property type="entry name" value="FERROCHELATASE"/>
    <property type="match status" value="1"/>
</dbReference>
<dbReference type="PANTHER" id="PTHR11108:SF1">
    <property type="entry name" value="FERROCHELATASE, MITOCHONDRIAL"/>
    <property type="match status" value="1"/>
</dbReference>
<dbReference type="Pfam" id="PF00762">
    <property type="entry name" value="Ferrochelatase"/>
    <property type="match status" value="1"/>
</dbReference>
<dbReference type="SUPFAM" id="SSF53800">
    <property type="entry name" value="Chelatase"/>
    <property type="match status" value="1"/>
</dbReference>
<dbReference type="PROSITE" id="PS00534">
    <property type="entry name" value="FERROCHELATASE"/>
    <property type="match status" value="1"/>
</dbReference>
<evidence type="ECO:0000255" key="1">
    <source>
        <dbReference type="HAMAP-Rule" id="MF_00323"/>
    </source>
</evidence>
<proteinExistence type="inferred from homology"/>
<protein>
    <recommendedName>
        <fullName evidence="1">Ferrochelatase</fullName>
        <ecNumber evidence="1">4.98.1.1</ecNumber>
    </recommendedName>
    <alternativeName>
        <fullName evidence="1">Heme synthase</fullName>
    </alternativeName>
    <alternativeName>
        <fullName evidence="1">Protoheme ferro-lyase</fullName>
    </alternativeName>
</protein>
<gene>
    <name evidence="1" type="primary">hemH</name>
    <name type="ordered locus">RSc2643</name>
    <name type="ORF">RS04573</name>
</gene>
<accession>Q8XW32</accession>
<feature type="chain" id="PRO_0000175187" description="Ferrochelatase">
    <location>
        <begin position="1"/>
        <end position="371"/>
    </location>
</feature>
<feature type="binding site" evidence="1">
    <location>
        <position position="218"/>
    </location>
    <ligand>
        <name>Fe cation</name>
        <dbReference type="ChEBI" id="CHEBI:24875"/>
    </ligand>
</feature>
<feature type="binding site" evidence="1">
    <location>
        <position position="299"/>
    </location>
    <ligand>
        <name>Fe cation</name>
        <dbReference type="ChEBI" id="CHEBI:24875"/>
    </ligand>
</feature>
<organism>
    <name type="scientific">Ralstonia nicotianae (strain ATCC BAA-1114 / GMI1000)</name>
    <name type="common">Ralstonia solanacearum</name>
    <dbReference type="NCBI Taxonomy" id="267608"/>
    <lineage>
        <taxon>Bacteria</taxon>
        <taxon>Pseudomonadati</taxon>
        <taxon>Pseudomonadota</taxon>
        <taxon>Betaproteobacteria</taxon>
        <taxon>Burkholderiales</taxon>
        <taxon>Burkholderiaceae</taxon>
        <taxon>Ralstonia</taxon>
        <taxon>Ralstonia solanacearum species complex</taxon>
    </lineage>
</organism>
<keyword id="KW-0963">Cytoplasm</keyword>
<keyword id="KW-0350">Heme biosynthesis</keyword>
<keyword id="KW-0408">Iron</keyword>
<keyword id="KW-0456">Lyase</keyword>
<keyword id="KW-0479">Metal-binding</keyword>
<keyword id="KW-0627">Porphyrin biosynthesis</keyword>
<keyword id="KW-1185">Reference proteome</keyword>
<comment type="function">
    <text evidence="1">Catalyzes the ferrous insertion into protoporphyrin IX.</text>
</comment>
<comment type="catalytic activity">
    <reaction evidence="1">
        <text>heme b + 2 H(+) = protoporphyrin IX + Fe(2+)</text>
        <dbReference type="Rhea" id="RHEA:22584"/>
        <dbReference type="ChEBI" id="CHEBI:15378"/>
        <dbReference type="ChEBI" id="CHEBI:29033"/>
        <dbReference type="ChEBI" id="CHEBI:57306"/>
        <dbReference type="ChEBI" id="CHEBI:60344"/>
        <dbReference type="EC" id="4.98.1.1"/>
    </reaction>
</comment>
<comment type="pathway">
    <text evidence="1">Porphyrin-containing compound metabolism; protoheme biosynthesis; protoheme from protoporphyrin-IX: step 1/1.</text>
</comment>
<comment type="subcellular location">
    <subcellularLocation>
        <location evidence="1">Cytoplasm</location>
    </subcellularLocation>
</comment>
<comment type="similarity">
    <text evidence="1">Belongs to the ferrochelatase family.</text>
</comment>